<name>P53_EQUAS</name>
<reference key="1">
    <citation type="journal article" date="1995" name="DNA Seq.">
        <title>Nucleotide sequence of exons 5 to 9 of the p53 tumour-suppressor gene of the donkey (Equus asinus).</title>
        <authorList>
            <person name="Nasir L."/>
            <person name="Reid S.W."/>
        </authorList>
    </citation>
    <scope>NUCLEOTIDE SEQUENCE [GENOMIC DNA]</scope>
</reference>
<accession>Q29480</accession>
<proteinExistence type="inferred from homology"/>
<gene>
    <name type="primary">TP53</name>
</gene>
<organism>
    <name type="scientific">Equus asinus</name>
    <name type="common">Donkey</name>
    <name type="synonym">Equus africanus asinus</name>
    <dbReference type="NCBI Taxonomy" id="9793"/>
    <lineage>
        <taxon>Eukaryota</taxon>
        <taxon>Metazoa</taxon>
        <taxon>Chordata</taxon>
        <taxon>Craniata</taxon>
        <taxon>Vertebrata</taxon>
        <taxon>Euteleostomi</taxon>
        <taxon>Mammalia</taxon>
        <taxon>Eutheria</taxon>
        <taxon>Laurasiatheria</taxon>
        <taxon>Perissodactyla</taxon>
        <taxon>Equidae</taxon>
        <taxon>Equus</taxon>
    </lineage>
</organism>
<evidence type="ECO:0000250" key="1"/>
<evidence type="ECO:0000250" key="2">
    <source>
        <dbReference type="UniProtKB" id="P02340"/>
    </source>
</evidence>
<evidence type="ECO:0000250" key="3">
    <source>
        <dbReference type="UniProtKB" id="P04637"/>
    </source>
</evidence>
<evidence type="ECO:0000250" key="4">
    <source>
        <dbReference type="UniProtKB" id="P10361"/>
    </source>
</evidence>
<evidence type="ECO:0000250" key="5">
    <source>
        <dbReference type="UniProtKB" id="Q9TUB2"/>
    </source>
</evidence>
<evidence type="ECO:0000256" key="6">
    <source>
        <dbReference type="SAM" id="MobiDB-lite"/>
    </source>
</evidence>
<evidence type="ECO:0000305" key="7"/>
<comment type="function">
    <text evidence="2 3">Multifunctional transcription factor that induces cell cycle arrest, DNA repair or apoptosis upon binding to its target DNA sequence. Acts as a tumor suppressor in many tumor types; induces growth arrest or apoptosis depending on the physiological circumstances and cell type. Negatively regulates cell division by controlling expression of a set of genes required for this process. One of the activated genes is an inhibitor of cyclin-dependent kinases. Apoptosis induction seems to be mediated either by stimulation of BAX and FAS antigen expression, or by repression of Bcl-2 expression. Its pro-apoptotic activity is activated via its interaction with PPP1R13B/ASPP1 or TP53BP2/ASPP2 (By similarity). However, this activity is inhibited when the interaction with PPP1R13B/ASPP1 or TP53BP2/ASPP2 is displaced by PPP1R13L/iASPP (By similarity). In cooperation with mitochondrial PPIF is involved in activating oxidative stress-induced necrosis; the function is largely independent of transcription. Prevents CDK7 kinase activity when associated to CAK complex in response to DNA damage, thus stopping cell cycle progression. Induces the transcription of long intergenic non-coding RNA p21 (lincRNA-p21) and lincRNA-Mkln1. LincRNA-p21 participates in TP53-dependent transcriptional repression leading to apoptosis and seems to have an effect on cell-cycle regulation. Regulates the circadian clock by repressing CLOCK-BMAL1-mediated transcriptional activation of PER2.</text>
</comment>
<comment type="cofactor">
    <cofactor evidence="1">
        <name>Zn(2+)</name>
        <dbReference type="ChEBI" id="CHEBI:29105"/>
    </cofactor>
    <text evidence="1">Binds 1 zinc ion per subunit.</text>
</comment>
<comment type="subunit">
    <text evidence="2 3 4 5">Forms homodimers and homotetramers (By similarity). Binds DNA as a homotetramer. Interacts with AXIN1. Probably part of a complex consisting of TP53, HIPK2 and AXIN1. Interacts with histone acetyltransferases EP300 and methyltransferases HRMT1L2 and CARM1, and recruits them to promoters. Interacts (via C-terminus) with TAF1; when TAF1 is part of the TFIID complex. Interacts with ING4; this interaction may be indirect. Found in a complex with CABLES1 and TP73. Interacts with HIPK1, HIPK2, and TP53INP1. Interacts with WWOX. Interacts with USP7 and SYVN1. Interacts with HSP90AB1. Interacts with CHD8; leading to recruit histone H1 and prevent transactivation activity. Interacts with ARMC10, BANP, CDKN2AIP, NUAK1, STK11/LKB1, UHRF2 and E4F. Interacts with YWHAZ; the interaction enhances TP53 transcriptional activity. Phosphorylation of YWHAZ on 'Ser-58' inhibits this interaction. Interacts (via DNA-binding domain) with MAML1 (via N-terminus). Interacts with MKRN1. Interacts with PML (via C-terminus). Interacts with MDM2; leading to ubiquitination and proteasomal degradation of TP53. Directly interacts with FBXO42; leading to ubiquitination and degradation of TP53. Interacts (phosphorylated at Ser-15 by ATM) with the phosphatase PP2A-PPP2R5C holoenzyme; regulates stress-induced TP53-dependent inhibition of cell proliferation. Interacts with PPP2R2A. Interacts with AURKA, DAXX, BRD7 and TRIM24. Interacts (when monomethylated at Lys-375) with L3MBTL1. Interacts with GRK5. Binds to the CAK complex (CDK7, cyclin H and MAT1) in response to DNA damage. Interacts with CDK5 in neurons. Interacts with AURKB, SETD2, UHRF2 and NOC2L. Interacts (via N-terminus) with PTK2/FAK1; this promotes ubiquitination by MDM2. Interacts with PTK2B/PYK2; this promotes ubiquitination by MDM2. Interacts with PRKCG. Interacts with PPIF; the association implicates preferentially tetrameric TP53, is induced by oxidative stress and is impaired by cyclosporin A (CsA). Interacts with SNAI1; the interaction induces SNAI1 degradation via MDM2-mediated ubiquitination and inhibits SNAI1-induced cell invasion. Interacts with UBC9. Interacts with ZNF385B; the interaction is direct. Interacts (via DNA-binding domain) with ZNF385A; the interaction is direct and enhances p53/TP53 transactivation functions on cell-cycle arrest target genes, resulting in growth arrest (By similarity). Interacts with ANKRD2. Interacts with RFFL and RNF34; involved in p53/TP53 ubiquitination. Interacts with MTA1 and COP1. Interacts with CCAR2 (via N-terminus). Interacts with MORC3. Interacts (via C-terminus) with POU4F2 (via C-terminus). Interacts (via oligomerization region) with NOP53; the interaction is direct and may prevent the MDM2-mediated proteasomal degradation of TP53. Interacts with AFG1L; mediates mitochondrial translocation of TP53. Interacts with UBD (By similarity). Interacts with TAF6 (By similarity). Interacts with C10orf90/FATS; the interaction inhibits binding of TP53 and MDM2 (By similarity). Interacts with NUPR1; interaction is stress-dependent. Forms a complex with EP300 and NUPR1; this complex binds CDKN1A promoter leading to transcriptional induction of CDKN1A (By similarity). Interacts with PRMT5 in response to DNA damage; the interaction is TTC5/STRAP dependent (By similarity). Interacts with PPP1R13L (via SH3 domain and ANK repeats); the interaction inhibits pro-apoptotic activity of p53/TP53 (By similarity). Interacts with PPP1R13B/ASPP1 and TP53BP2/ASPP2; the interactions promotes pro-apoptotic activity (By similarity). When phosphorylated at Ser-15, interacts with DDX3X and gamma-tubulin (By similarity). Interacts with KAT7/HBO1; leading to inhibit histone acetyltransferase activity of KAT7/HBO1 (By similarity). Interacts (via N-terminus) with E3 ubiquitin-protein ligase MUL1; the interaction results in ubiquitination of cytoplasmic TP53 at Lys-24 and subsequent proteasomal degradation (By similarity). Interacts with S100A4; this interaction promotes TP53 degradation (By similarity). Interacts with TTC5/STRAP; the interaction may result in increased mitochondrial-dependent apoptosis (By similarity). Interacts with NQO1; this interaction is NADH-dependent, stabilizes TP53 in response to oxidative stress and protects it from ubiquitin-independent degradation by the 20S proteasome (By similarity). Interacts with DAZAP2 at TP53 target gene promoters; the interaction is triggered by DNA damage and leads to modulation of the expression of a subset of TP53 target genes, reducing DNA damage-induced cell death by limiting the expression of cell death-mediating TP53 target genes (By similarity). Interacts (via N-terminus) with ZNF768 (via zinc-finger domains); interaction might be facilitated by TP53 oligomerization state (By similarity). Forms a ternary complex with ALDOB and G6PD; this interaction is direct. ALDOB stabilizes the complex inhibiting G6PD activity and keeping oxidative pentose phosphate metabolism in check (By similarity). Interacts with MORN3; the interactions mediate post-transcriptional modifications of TP53 by MDM2 and SIRT1 (By similarity). Interacts with HSPA9/MOT-2; the interaction promotes the degradation of TP53 (By similarity).</text>
</comment>
<comment type="subcellular location">
    <subcellularLocation>
        <location evidence="3">Cytoplasm</location>
    </subcellularLocation>
    <subcellularLocation>
        <location evidence="3">Nucleus</location>
    </subcellularLocation>
    <subcellularLocation>
        <location evidence="3">Nucleus</location>
        <location evidence="3">PML body</location>
    </subcellularLocation>
    <subcellularLocation>
        <location evidence="3">Endoplasmic reticulum</location>
    </subcellularLocation>
    <subcellularLocation>
        <location evidence="3">Mitochondrion matrix</location>
    </subcellularLocation>
    <subcellularLocation>
        <location evidence="3">Cytoplasm</location>
        <location evidence="3">Cytoskeleton</location>
        <location evidence="3">Microtubule organizing center</location>
        <location evidence="3">Centrosome</location>
    </subcellularLocation>
    <text evidence="3">Interaction with BANP promotes nuclear localization. Recruited into PML bodies together with CHEK2. Translocates to mitochondria upon oxidative stress. Translocates to mitochondria in response to mitomycin C treatment (By similarity). Competitive inhibition of TP53 interaction with HSPA9/MOT-2 by UBXN2A results in increased protein abundance and subsequent translocation of TP53 to the nucleus (By similarity).</text>
</comment>
<comment type="domain">
    <text evidence="3">The N-terminal and C-terminal disordered regions undergo liquid-liquid phase separation (LLPS) following homotetramerization and activation. Post-translational modifications, such as phosphorylation or lactylation affect the ability to undergo LLPS.</text>
</comment>
<comment type="domain">
    <text evidence="3">The nuclear export signal acts as a transcriptional repression domain. The TADI and TADII motifs (residues 17 to 25 and 48 to 56) correspond both to 9aaTAD motifs which are transactivation domains present in a large number of yeast and animal transcription factors.</text>
</comment>
<comment type="PTM">
    <text evidence="1">Phosphorylated by VRK1, which may prevent the interaction with MDM2. Phosphorylated by CHEK2 in response to DNA damage, which prevents ubiquitination by MDM2. Phosphorylated by PLK3 in response to reactive oxygen species (ROS), promoting p53/TP53-mediated apoptosis. Probably phosphorylated on by CDK7 in a CAK complex in response to DNA damage. Phosphorylated by CK2 following UV but not gamma irradiation. Probably stabilized by CDK5-mediated phosphorylation in response to genotoxic and oxidative stresses, leading to accumulation of p53/TP53, particularly in the nucleus, thus inducing the transactivation of p53/TP53 target genes. Phosphorylated by DYRK2 in response to genotoxic stress. Phosphorylated at Ser-191 by CDK2 in response to DNA-damage (By similarity).</text>
</comment>
<comment type="PTM">
    <text evidence="3">Monomethylated by SETD7, leading to stabilization and increased transcriptional activation. Monomethylated by SMYD2, leading to decreased DNA-binding activity and subsequent transcriptional regulation activity. Monomethylation by SETD7 prevents interaction with SMYD2 and subsequent monomethylation by SMYD2 (By similarity). Dimethylated by EHMT1 and EHMT2. Monomethylated by KMT5A, promoting interaction with L3MBTL1 and leading to repress transcriptional activity. Demethylation by KDM1A prevents interaction with TP53BP1 and represses TP53-mediated transcriptional activation (By similarity). Methylated by PRMT5; methylation is increased after DNA damage and might possibly affect TP53 target gene specificity (By similarity).</text>
</comment>
<comment type="PTM">
    <text evidence="1">Sumoylated with SUMO1.</text>
</comment>
<comment type="PTM">
    <text evidence="2 3">Ubiquitinated by MDM2 and SYVN1, which leads to proteasomal degradation. Ubiquitinated by RFWD3, which works in cooperation with MDM2 and may catalyze the formation of short polyubiquitin chains on p53/TP53 that are not targeted to the proteasome. Ubiquitinated by MKRN1, which leads to proteasomal degradation. Deubiquitinated by USP10, leading to stabilize it. Ubiquitinated by TRIM24, RFFL, RNF34 and RNF125, which leads to proteasomal degradation. Ubiquitination by TOPORS induces degradation. Deubiquitination by USP7, leading to stabilize it. Ubiquitinated by COP1, which leads to proteasomal degradation (By similarity). Ubiquitination and subsequent proteasomal degradation is negatively regulated by CCAR2 (By similarity). Polyubiquitinated by C10orf90/FATS, polyubiquitination is 'Lys-48'-linkage independent and non-proteolytic, leading to TP53 stabilization (By similarity).</text>
</comment>
<comment type="PTM">
    <text evidence="3">Lactylation by AARS1 prevents ability to undergo liquid-liquid phase separation (LLPS), thereby inhibiting transcription factor activity.</text>
</comment>
<comment type="disease">
    <text>p53 is found in increased amounts in a wide variety of transformed cells. p53 is frequently mutated or inactivated in many types of cancer.</text>
</comment>
<comment type="similarity">
    <text evidence="7">Belongs to the p53 family.</text>
</comment>
<sequence length="207" mass="23429">YSPALNKMFCQLAKTCPVYLRISSPPPPGTRVRAMAIYKKSEFMTEVVRRCPHHERCSDSSDGLAPPQHLIRVEGNLRAEYLDDRNTLRHSVVVPYEPPEVGSDCTTIHYNFMCNSSCMGGMNRRPILTIITLEDSSGNLLGRNSFEVRVCACPGRDRRTEEENFRKKEEPCPEPPPRSTKRVLSSNTSSSPPQKEDPLDGEYFTLH</sequence>
<feature type="chain" id="PRO_0000185700" description="Cellular tumor antigen p53">
    <location>
        <begin position="1" status="less than"/>
        <end position="207" status="greater than"/>
    </location>
</feature>
<feature type="DNA-binding region" evidence="3">
    <location>
        <begin position="1" status="less than"/>
        <end position="168"/>
    </location>
</feature>
<feature type="region of interest" description="Required for interaction with FBXO42" evidence="1">
    <location>
        <begin position="1" status="less than"/>
        <end position="112"/>
    </location>
</feature>
<feature type="region of interest" description="Interaction with E4F1" evidence="1">
    <location>
        <begin position="132"/>
        <end position="170"/>
    </location>
</feature>
<feature type="region of interest" description="Interaction with DNA" evidence="1">
    <location>
        <begin position="149"/>
        <end position="156"/>
    </location>
</feature>
<feature type="region of interest" description="Disordered" evidence="6">
    <location>
        <begin position="159"/>
        <end position="207"/>
    </location>
</feature>
<feature type="region of interest" description="Oligomerization">
    <location>
        <begin position="201"/>
        <end position="207" status="greater than"/>
    </location>
</feature>
<feature type="short sequence motif" description="Bipartite nuclear localization signal" evidence="1">
    <location>
        <begin position="181"/>
        <end position="197"/>
    </location>
</feature>
<feature type="compositionally biased region" description="Basic and acidic residues" evidence="6">
    <location>
        <begin position="159"/>
        <end position="171"/>
    </location>
</feature>
<feature type="compositionally biased region" description="Polar residues" evidence="6">
    <location>
        <begin position="182"/>
        <end position="193"/>
    </location>
</feature>
<feature type="binding site" evidence="3">
    <location>
        <position position="51"/>
    </location>
    <ligand>
        <name>Zn(2+)</name>
        <dbReference type="ChEBI" id="CHEBI:29105"/>
    </ligand>
</feature>
<feature type="binding site" evidence="3">
    <location>
        <position position="54"/>
    </location>
    <ligand>
        <name>Zn(2+)</name>
        <dbReference type="ChEBI" id="CHEBI:29105"/>
    </ligand>
</feature>
<feature type="binding site" evidence="3">
    <location>
        <position position="114"/>
    </location>
    <ligand>
        <name>Zn(2+)</name>
        <dbReference type="ChEBI" id="CHEBI:29105"/>
    </ligand>
</feature>
<feature type="binding site" evidence="3">
    <location>
        <position position="118"/>
    </location>
    <ligand>
        <name>Zn(2+)</name>
        <dbReference type="ChEBI" id="CHEBI:29105"/>
    </ligand>
</feature>
<feature type="modified residue" description="N6-lactoyllysine" evidence="3">
    <location>
        <position position="14"/>
    </location>
</feature>
<feature type="modified residue" description="Phosphoserine; by AURKB" evidence="3">
    <location>
        <position position="58"/>
    </location>
</feature>
<feature type="modified residue" description="Phosphoserine; by AURKB" evidence="3">
    <location>
        <position position="145"/>
    </location>
</feature>
<feature type="modified residue" description="Phosphothreonine; by AURKB" evidence="3">
    <location>
        <position position="160"/>
    </location>
</feature>
<feature type="modified residue" description="N6-acetyllysine" evidence="3">
    <location>
        <position position="181"/>
    </location>
</feature>
<feature type="modified residue" description="Phosphoserine; by AURKA, CDK1 and CDK2" evidence="3">
    <location>
        <position position="191"/>
    </location>
</feature>
<feature type="cross-link" description="Glycyl lysine isopeptide (Lys-Gly) (interchain with G-Cter in ubiquitin)" evidence="3">
    <location>
        <position position="167"/>
    </location>
</feature>
<feature type="cross-link" description="Glycyl lysine isopeptide (Lys-Gly) (interchain with G-Cter in ubiquitin)" evidence="3">
    <location>
        <position position="168"/>
    </location>
</feature>
<feature type="non-terminal residue">
    <location>
        <position position="1"/>
    </location>
</feature>
<feature type="non-terminal residue">
    <location>
        <position position="207"/>
    </location>
</feature>
<protein>
    <recommendedName>
        <fullName>Cellular tumor antigen p53</fullName>
    </recommendedName>
    <alternativeName>
        <fullName>Tumor suppressor p53</fullName>
    </alternativeName>
</protein>
<keyword id="KW-0007">Acetylation</keyword>
<keyword id="KW-0010">Activator</keyword>
<keyword id="KW-0053">Apoptosis</keyword>
<keyword id="KW-0090">Biological rhythms</keyword>
<keyword id="KW-0131">Cell cycle</keyword>
<keyword id="KW-0963">Cytoplasm</keyword>
<keyword id="KW-0206">Cytoskeleton</keyword>
<keyword id="KW-0238">DNA-binding</keyword>
<keyword id="KW-0256">Endoplasmic reticulum</keyword>
<keyword id="KW-1017">Isopeptide bond</keyword>
<keyword id="KW-0479">Metal-binding</keyword>
<keyword id="KW-0496">Mitochondrion</keyword>
<keyword id="KW-1210">Necrosis</keyword>
<keyword id="KW-0539">Nucleus</keyword>
<keyword id="KW-0597">Phosphoprotein</keyword>
<keyword id="KW-1185">Reference proteome</keyword>
<keyword id="KW-0678">Repressor</keyword>
<keyword id="KW-0804">Transcription</keyword>
<keyword id="KW-0805">Transcription regulation</keyword>
<keyword id="KW-0043">Tumor suppressor</keyword>
<keyword id="KW-0832">Ubl conjugation</keyword>
<keyword id="KW-0862">Zinc</keyword>
<dbReference type="EMBL" id="U26741">
    <property type="protein sequence ID" value="AAB41265.1"/>
    <property type="molecule type" value="Genomic_DNA"/>
</dbReference>
<dbReference type="SMR" id="Q29480"/>
<dbReference type="Proteomes" id="UP000694387">
    <property type="component" value="Unplaced"/>
</dbReference>
<dbReference type="GO" id="GO:0005813">
    <property type="term" value="C:centrosome"/>
    <property type="evidence" value="ECO:0000250"/>
    <property type="project" value="UniProtKB"/>
</dbReference>
<dbReference type="GO" id="GO:0005737">
    <property type="term" value="C:cytoplasm"/>
    <property type="evidence" value="ECO:0000250"/>
    <property type="project" value="UniProtKB"/>
</dbReference>
<dbReference type="GO" id="GO:0005783">
    <property type="term" value="C:endoplasmic reticulum"/>
    <property type="evidence" value="ECO:0007669"/>
    <property type="project" value="UniProtKB-SubCell"/>
</dbReference>
<dbReference type="GO" id="GO:0005759">
    <property type="term" value="C:mitochondrial matrix"/>
    <property type="evidence" value="ECO:0007669"/>
    <property type="project" value="UniProtKB-SubCell"/>
</dbReference>
<dbReference type="GO" id="GO:0005739">
    <property type="term" value="C:mitochondrion"/>
    <property type="evidence" value="ECO:0000250"/>
    <property type="project" value="UniProtKB"/>
</dbReference>
<dbReference type="GO" id="GO:0005634">
    <property type="term" value="C:nucleus"/>
    <property type="evidence" value="ECO:0000250"/>
    <property type="project" value="UniProtKB"/>
</dbReference>
<dbReference type="GO" id="GO:0016605">
    <property type="term" value="C:PML body"/>
    <property type="evidence" value="ECO:0007669"/>
    <property type="project" value="UniProtKB-SubCell"/>
</dbReference>
<dbReference type="GO" id="GO:0000981">
    <property type="term" value="F:DNA-binding transcription factor activity, RNA polymerase II-specific"/>
    <property type="evidence" value="ECO:0000250"/>
    <property type="project" value="UniProtKB"/>
</dbReference>
<dbReference type="GO" id="GO:0046872">
    <property type="term" value="F:metal ion binding"/>
    <property type="evidence" value="ECO:0007669"/>
    <property type="project" value="UniProtKB-KW"/>
</dbReference>
<dbReference type="GO" id="GO:0140693">
    <property type="term" value="F:molecular condensate scaffold activity"/>
    <property type="evidence" value="ECO:0000250"/>
    <property type="project" value="UniProtKB"/>
</dbReference>
<dbReference type="GO" id="GO:1990841">
    <property type="term" value="F:promoter-specific chromatin binding"/>
    <property type="evidence" value="ECO:0000250"/>
    <property type="project" value="UniProtKB"/>
</dbReference>
<dbReference type="GO" id="GO:0000978">
    <property type="term" value="F:RNA polymerase II cis-regulatory region sequence-specific DNA binding"/>
    <property type="evidence" value="ECO:0000250"/>
    <property type="project" value="UniProtKB"/>
</dbReference>
<dbReference type="GO" id="GO:0006915">
    <property type="term" value="P:apoptotic process"/>
    <property type="evidence" value="ECO:0007669"/>
    <property type="project" value="UniProtKB-KW"/>
</dbReference>
<dbReference type="GO" id="GO:0048512">
    <property type="term" value="P:circadian behavior"/>
    <property type="evidence" value="ECO:0000250"/>
    <property type="project" value="UniProtKB"/>
</dbReference>
<dbReference type="GO" id="GO:0006974">
    <property type="term" value="P:DNA damage response"/>
    <property type="evidence" value="ECO:0000250"/>
    <property type="project" value="UniProtKB"/>
</dbReference>
<dbReference type="GO" id="GO:0043153">
    <property type="term" value="P:entrainment of circadian clock by photoperiod"/>
    <property type="evidence" value="ECO:0000250"/>
    <property type="project" value="UniProtKB"/>
</dbReference>
<dbReference type="GO" id="GO:0045892">
    <property type="term" value="P:negative regulation of DNA-templated transcription"/>
    <property type="evidence" value="ECO:0000250"/>
    <property type="project" value="UniProtKB"/>
</dbReference>
<dbReference type="GO" id="GO:2001244">
    <property type="term" value="P:positive regulation of intrinsic apoptotic signaling pathway"/>
    <property type="evidence" value="ECO:0000250"/>
    <property type="project" value="UniProtKB"/>
</dbReference>
<dbReference type="GO" id="GO:0045944">
    <property type="term" value="P:positive regulation of transcription by RNA polymerase II"/>
    <property type="evidence" value="ECO:0000250"/>
    <property type="project" value="UniProtKB"/>
</dbReference>
<dbReference type="CDD" id="cd08367">
    <property type="entry name" value="P53"/>
    <property type="match status" value="1"/>
</dbReference>
<dbReference type="FunFam" id="2.60.40.720:FF:000003">
    <property type="entry name" value="Cellular tumor antigen p53"/>
    <property type="match status" value="1"/>
</dbReference>
<dbReference type="Gene3D" id="2.60.40.720">
    <property type="match status" value="1"/>
</dbReference>
<dbReference type="InterPro" id="IPR008967">
    <property type="entry name" value="p53-like_TF_DNA-bd_sf"/>
</dbReference>
<dbReference type="InterPro" id="IPR012346">
    <property type="entry name" value="p53/RUNT-type_TF_DNA-bd_sf"/>
</dbReference>
<dbReference type="InterPro" id="IPR011615">
    <property type="entry name" value="p53_DNA-bd"/>
</dbReference>
<dbReference type="InterPro" id="IPR002117">
    <property type="entry name" value="p53_tumour_suppressor"/>
</dbReference>
<dbReference type="PANTHER" id="PTHR11447">
    <property type="entry name" value="CELLULAR TUMOR ANTIGEN P53"/>
    <property type="match status" value="1"/>
</dbReference>
<dbReference type="PANTHER" id="PTHR11447:SF6">
    <property type="entry name" value="CELLULAR TUMOR ANTIGEN P53"/>
    <property type="match status" value="1"/>
</dbReference>
<dbReference type="Pfam" id="PF00870">
    <property type="entry name" value="P53"/>
    <property type="match status" value="1"/>
</dbReference>
<dbReference type="PRINTS" id="PR00386">
    <property type="entry name" value="P53SUPPRESSR"/>
</dbReference>
<dbReference type="SUPFAM" id="SSF49417">
    <property type="entry name" value="p53-like transcription factors"/>
    <property type="match status" value="1"/>
</dbReference>
<dbReference type="PROSITE" id="PS00348">
    <property type="entry name" value="P53"/>
    <property type="match status" value="1"/>
</dbReference>